<gene>
    <name evidence="1" type="primary">rpoC</name>
    <name type="ordered locus">aq_1945</name>
</gene>
<comment type="function">
    <text evidence="1">DNA-dependent RNA polymerase catalyzes the transcription of DNA into RNA using the four ribonucleoside triphosphates as substrates.</text>
</comment>
<comment type="catalytic activity">
    <reaction evidence="1">
        <text>RNA(n) + a ribonucleoside 5'-triphosphate = RNA(n+1) + diphosphate</text>
        <dbReference type="Rhea" id="RHEA:21248"/>
        <dbReference type="Rhea" id="RHEA-COMP:14527"/>
        <dbReference type="Rhea" id="RHEA-COMP:17342"/>
        <dbReference type="ChEBI" id="CHEBI:33019"/>
        <dbReference type="ChEBI" id="CHEBI:61557"/>
        <dbReference type="ChEBI" id="CHEBI:140395"/>
        <dbReference type="EC" id="2.7.7.6"/>
    </reaction>
</comment>
<comment type="cofactor">
    <cofactor evidence="1">
        <name>Mg(2+)</name>
        <dbReference type="ChEBI" id="CHEBI:18420"/>
    </cofactor>
    <text evidence="1">Binds 1 Mg(2+) ion per subunit.</text>
</comment>
<comment type="cofactor">
    <cofactor evidence="1">
        <name>Zn(2+)</name>
        <dbReference type="ChEBI" id="CHEBI:29105"/>
    </cofactor>
    <text evidence="1">Binds 2 Zn(2+) ions per subunit.</text>
</comment>
<comment type="subunit">
    <text evidence="1">The RNAP catalytic core consists of 2 alpha, 1 beta, 1 beta' and 1 omega subunit. When a sigma factor is associated with the core the holoenzyme is formed, which can initiate transcription.</text>
</comment>
<comment type="similarity">
    <text evidence="1">Belongs to the RNA polymerase beta' chain family.</text>
</comment>
<proteinExistence type="inferred from homology"/>
<accession>O67763</accession>
<dbReference type="EC" id="2.7.7.6" evidence="1"/>
<dbReference type="EMBL" id="AE000657">
    <property type="protein sequence ID" value="AAC07724.1"/>
    <property type="molecule type" value="Genomic_DNA"/>
</dbReference>
<dbReference type="PIR" id="G70466">
    <property type="entry name" value="G70466"/>
</dbReference>
<dbReference type="RefSeq" id="NP_214332.1">
    <property type="nucleotide sequence ID" value="NC_000918.1"/>
</dbReference>
<dbReference type="RefSeq" id="WP_010881268.1">
    <property type="nucleotide sequence ID" value="NC_000918.1"/>
</dbReference>
<dbReference type="SMR" id="O67763"/>
<dbReference type="FunCoup" id="O67763">
    <property type="interactions" value="438"/>
</dbReference>
<dbReference type="STRING" id="224324.aq_1945"/>
<dbReference type="EnsemblBacteria" id="AAC07724">
    <property type="protein sequence ID" value="AAC07724"/>
    <property type="gene ID" value="aq_1945"/>
</dbReference>
<dbReference type="KEGG" id="aae:aq_1945"/>
<dbReference type="PATRIC" id="fig|224324.8.peg.1502"/>
<dbReference type="eggNOG" id="COG0086">
    <property type="taxonomic scope" value="Bacteria"/>
</dbReference>
<dbReference type="HOGENOM" id="CLU_000524_3_1_0"/>
<dbReference type="InParanoid" id="O67763"/>
<dbReference type="OrthoDB" id="9815296at2"/>
<dbReference type="Proteomes" id="UP000000798">
    <property type="component" value="Chromosome"/>
</dbReference>
<dbReference type="GO" id="GO:0000428">
    <property type="term" value="C:DNA-directed RNA polymerase complex"/>
    <property type="evidence" value="ECO:0007669"/>
    <property type="project" value="UniProtKB-KW"/>
</dbReference>
<dbReference type="GO" id="GO:0003677">
    <property type="term" value="F:DNA binding"/>
    <property type="evidence" value="ECO:0007669"/>
    <property type="project" value="UniProtKB-UniRule"/>
</dbReference>
<dbReference type="GO" id="GO:0003899">
    <property type="term" value="F:DNA-directed RNA polymerase activity"/>
    <property type="evidence" value="ECO:0007669"/>
    <property type="project" value="UniProtKB-UniRule"/>
</dbReference>
<dbReference type="GO" id="GO:0000287">
    <property type="term" value="F:magnesium ion binding"/>
    <property type="evidence" value="ECO:0007669"/>
    <property type="project" value="UniProtKB-UniRule"/>
</dbReference>
<dbReference type="GO" id="GO:0008270">
    <property type="term" value="F:zinc ion binding"/>
    <property type="evidence" value="ECO:0007669"/>
    <property type="project" value="UniProtKB-UniRule"/>
</dbReference>
<dbReference type="GO" id="GO:0006351">
    <property type="term" value="P:DNA-templated transcription"/>
    <property type="evidence" value="ECO:0007669"/>
    <property type="project" value="UniProtKB-UniRule"/>
</dbReference>
<dbReference type="CDD" id="cd02655">
    <property type="entry name" value="RNAP_beta'_C"/>
    <property type="match status" value="1"/>
</dbReference>
<dbReference type="CDD" id="cd01609">
    <property type="entry name" value="RNAP_beta'_N"/>
    <property type="match status" value="1"/>
</dbReference>
<dbReference type="FunFam" id="1.10.150.390:FF:000002">
    <property type="entry name" value="DNA-directed RNA polymerase subunit beta"/>
    <property type="match status" value="1"/>
</dbReference>
<dbReference type="Gene3D" id="1.10.132.30">
    <property type="match status" value="1"/>
</dbReference>
<dbReference type="Gene3D" id="1.10.150.390">
    <property type="match status" value="1"/>
</dbReference>
<dbReference type="Gene3D" id="1.10.1790.20">
    <property type="match status" value="1"/>
</dbReference>
<dbReference type="Gene3D" id="1.10.40.90">
    <property type="match status" value="1"/>
</dbReference>
<dbReference type="Gene3D" id="2.40.40.20">
    <property type="match status" value="1"/>
</dbReference>
<dbReference type="Gene3D" id="2.40.50.100">
    <property type="match status" value="4"/>
</dbReference>
<dbReference type="Gene3D" id="4.10.860.120">
    <property type="entry name" value="RNA polymerase II, clamp domain"/>
    <property type="match status" value="1"/>
</dbReference>
<dbReference type="Gene3D" id="1.10.274.100">
    <property type="entry name" value="RNA polymerase Rpb1, domain 3"/>
    <property type="match status" value="2"/>
</dbReference>
<dbReference type="HAMAP" id="MF_01322">
    <property type="entry name" value="RNApol_bact_RpoC"/>
    <property type="match status" value="1"/>
</dbReference>
<dbReference type="InterPro" id="IPR045867">
    <property type="entry name" value="DNA-dir_RpoC_beta_prime"/>
</dbReference>
<dbReference type="InterPro" id="IPR012754">
    <property type="entry name" value="DNA-dir_RpoC_beta_prime_bact"/>
</dbReference>
<dbReference type="InterPro" id="IPR000722">
    <property type="entry name" value="RNA_pol_asu"/>
</dbReference>
<dbReference type="InterPro" id="IPR006592">
    <property type="entry name" value="RNA_pol_N"/>
</dbReference>
<dbReference type="InterPro" id="IPR007080">
    <property type="entry name" value="RNA_pol_Rpb1_1"/>
</dbReference>
<dbReference type="InterPro" id="IPR007066">
    <property type="entry name" value="RNA_pol_Rpb1_3"/>
</dbReference>
<dbReference type="InterPro" id="IPR042102">
    <property type="entry name" value="RNA_pol_Rpb1_3_sf"/>
</dbReference>
<dbReference type="InterPro" id="IPR007083">
    <property type="entry name" value="RNA_pol_Rpb1_4"/>
</dbReference>
<dbReference type="InterPro" id="IPR007081">
    <property type="entry name" value="RNA_pol_Rpb1_5"/>
</dbReference>
<dbReference type="InterPro" id="IPR044893">
    <property type="entry name" value="RNA_pol_Rpb1_clamp_domain"/>
</dbReference>
<dbReference type="InterPro" id="IPR038120">
    <property type="entry name" value="Rpb1_funnel_sf"/>
</dbReference>
<dbReference type="InterPro" id="IPR011054">
    <property type="entry name" value="Rudment_hybrid_motif"/>
</dbReference>
<dbReference type="NCBIfam" id="TIGR02386">
    <property type="entry name" value="rpoC_TIGR"/>
    <property type="match status" value="1"/>
</dbReference>
<dbReference type="PANTHER" id="PTHR19376">
    <property type="entry name" value="DNA-DIRECTED RNA POLYMERASE"/>
    <property type="match status" value="1"/>
</dbReference>
<dbReference type="PANTHER" id="PTHR19376:SF54">
    <property type="entry name" value="DNA-DIRECTED RNA POLYMERASE SUBUNIT BETA"/>
    <property type="match status" value="1"/>
</dbReference>
<dbReference type="Pfam" id="PF04997">
    <property type="entry name" value="RNA_pol_Rpb1_1"/>
    <property type="match status" value="1"/>
</dbReference>
<dbReference type="Pfam" id="PF00623">
    <property type="entry name" value="RNA_pol_Rpb1_2"/>
    <property type="match status" value="2"/>
</dbReference>
<dbReference type="Pfam" id="PF04983">
    <property type="entry name" value="RNA_pol_Rpb1_3"/>
    <property type="match status" value="1"/>
</dbReference>
<dbReference type="Pfam" id="PF05000">
    <property type="entry name" value="RNA_pol_Rpb1_4"/>
    <property type="match status" value="1"/>
</dbReference>
<dbReference type="Pfam" id="PF04998">
    <property type="entry name" value="RNA_pol_Rpb1_5"/>
    <property type="match status" value="1"/>
</dbReference>
<dbReference type="SMART" id="SM00663">
    <property type="entry name" value="RPOLA_N"/>
    <property type="match status" value="1"/>
</dbReference>
<dbReference type="SUPFAM" id="SSF64484">
    <property type="entry name" value="beta and beta-prime subunits of DNA dependent RNA-polymerase"/>
    <property type="match status" value="1"/>
</dbReference>
<dbReference type="SUPFAM" id="SSF51246">
    <property type="entry name" value="Rudiment single hybrid motif"/>
    <property type="match status" value="1"/>
</dbReference>
<organism>
    <name type="scientific">Aquifex aeolicus (strain VF5)</name>
    <dbReference type="NCBI Taxonomy" id="224324"/>
    <lineage>
        <taxon>Bacteria</taxon>
        <taxon>Pseudomonadati</taxon>
        <taxon>Aquificota</taxon>
        <taxon>Aquificia</taxon>
        <taxon>Aquificales</taxon>
        <taxon>Aquificaceae</taxon>
        <taxon>Aquifex</taxon>
    </lineage>
</organism>
<evidence type="ECO:0000255" key="1">
    <source>
        <dbReference type="HAMAP-Rule" id="MF_01322"/>
    </source>
</evidence>
<name>RPOC_AQUAE</name>
<sequence>MSEARRGIFPFSKIKLMLASPEDIRSWSHGEVKRPETLNYRTLKPEKDGLFCAKIFGPIKDYECLCGKYRGKRYEGKICEKCGVEVTTSYVRRQRFGHIELAAPVVHIWFLKSTPSKIGTLLNLTSRDVERVAYFESYLVIEYPNEEEEEKFEKDEHTIPLNDGISTKWVKLHVVNEEEFEEKYAFTIDEKYEHGMGAEILKEVLSKLDLDAYSRKLKEIVKPYSIGFEDLGKEIEQKYKNLYQKLIKVIADDFRAYGVEIKGLEDHGLSLEQAIHRILNEELYLNVETGEISLEDCGDSCLTGRDALKEYYERVREHKKDIPIFEKIKEDIRSTVLREISEARIRKALRTLQLVEGFKKSGNRPEWMILEVLPVLPPELRPLVALDGGRFATSDLNDFYRRVINRNNRLKRLIELNAPDIIIRNEKRMLQEAVDALIDNGKRGNPVKQNGRPLKSLADYLKGKQGRFRQNLLGKRVDYSGRSVIVVGPELQMHQCGLPKIMALELFKPFVYRRLEEKGYATSIKHAKRLVEQKTPEVWECLEEVVKEHPVLLNRAPTLHRPSIQAFEPVLVEGKAIQLHPLVCPPFNADFDGDQMAVHVPLGIEAQLESYILMLSTQNVLSPAHGKPLTMPSQDMVLGTYYITHDPIPGRKGEGKAFGTFEEVLKALELGHVDIHAKIKVKVGNEWIETTPGRVLFNSIMPEGQPFVNKTLDKKGLSKLITELYIRVGNEETVKFLDRVKELGFLRSTLAGISIGVEDLQVPKAKKKIIEEALKKTEEIWNQYVQGIITNKERYNRIIDVWSEATNLVSKAMFEEIEKSKRIENGKEYPGTFNPIYMMAISGARGNRDQIRQLAGMRGLMAKHSGEFIETPIISNFREGLSVLEYFISTYGARKGLADTALKTAFAGYLTRRLVDVAQDITITERDCGTVKGFEMEPIVEAGEERVPLKDRIFGRVLAEDVKDPYTGEIIARRNEVIDEKLAEKITKAGIEKVRVRSPLTCEAKHGVCAMCYGWDLSQRKIVSVGEAVGIIAAQSIGEPGTQLTMRTFHIGGAATAQKVQSFVKAESDGKVKFYNVKLIVNRKGEKINISKDAAIGIVDEEGRLLERHTIPYGARILVEEGQEVKAETKLADWDPFNTYIIAEVGGKVELRDIILDVTVREERDPITGKTASVISFMRPRDAMLHTPRIAVITEDGKEYIYDLPVNAILNIPPEKISLEWRVCPTCSESEETTIQHQYYVVKDLEVQPGDILARIPKETAKVRDIVGGLPRVEELFEARKPKNPAILSEIDGYVKIYEDADEVIIFNPRTGETAKYSIKKDELILVRHGQFVKKGQKITETKVAEIDGQVRIKGRGFKVIVYNPETGLQREYFVPKGKFLLVKEGDFVKAGDQLTDGTPVPEEILRIKGIEELEKFLLKEVQMVYKLQGVDINDKHFEIIIKQMLKKVRIIDPGDSRFLVGEEVDKEELEEEIQRIKLEGGKLPKAEPVLVGITRAALSTRSWISAASFQETTRVLTDASVEGKIDELRGLKENVIIGNIIPAGTGVDEYREVDVIPAEEKVLEEKKEPKEGS</sequence>
<reference key="1">
    <citation type="journal article" date="1998" name="Nature">
        <title>The complete genome of the hyperthermophilic bacterium Aquifex aeolicus.</title>
        <authorList>
            <person name="Deckert G."/>
            <person name="Warren P.V."/>
            <person name="Gaasterland T."/>
            <person name="Young W.G."/>
            <person name="Lenox A.L."/>
            <person name="Graham D.E."/>
            <person name="Overbeek R."/>
            <person name="Snead M.A."/>
            <person name="Keller M."/>
            <person name="Aujay M."/>
            <person name="Huber R."/>
            <person name="Feldman R.A."/>
            <person name="Short J.M."/>
            <person name="Olsen G.J."/>
            <person name="Swanson R.V."/>
        </authorList>
    </citation>
    <scope>NUCLEOTIDE SEQUENCE [LARGE SCALE GENOMIC DNA]</scope>
    <source>
        <strain>VF5</strain>
    </source>
</reference>
<feature type="chain" id="PRO_0000067701" description="DNA-directed RNA polymerase subunit beta'">
    <location>
        <begin position="1"/>
        <end position="1574"/>
    </location>
</feature>
<feature type="binding site" evidence="1">
    <location>
        <position position="64"/>
    </location>
    <ligand>
        <name>Zn(2+)</name>
        <dbReference type="ChEBI" id="CHEBI:29105"/>
        <label>1</label>
    </ligand>
</feature>
<feature type="binding site" evidence="1">
    <location>
        <position position="66"/>
    </location>
    <ligand>
        <name>Zn(2+)</name>
        <dbReference type="ChEBI" id="CHEBI:29105"/>
        <label>1</label>
    </ligand>
</feature>
<feature type="binding site" evidence="1">
    <location>
        <position position="79"/>
    </location>
    <ligand>
        <name>Zn(2+)</name>
        <dbReference type="ChEBI" id="CHEBI:29105"/>
        <label>1</label>
    </ligand>
</feature>
<feature type="binding site" evidence="1">
    <location>
        <position position="82"/>
    </location>
    <ligand>
        <name>Zn(2+)</name>
        <dbReference type="ChEBI" id="CHEBI:29105"/>
        <label>1</label>
    </ligand>
</feature>
<feature type="binding site" evidence="1">
    <location>
        <position position="590"/>
    </location>
    <ligand>
        <name>Mg(2+)</name>
        <dbReference type="ChEBI" id="CHEBI:18420"/>
    </ligand>
</feature>
<feature type="binding site" evidence="1">
    <location>
        <position position="592"/>
    </location>
    <ligand>
        <name>Mg(2+)</name>
        <dbReference type="ChEBI" id="CHEBI:18420"/>
    </ligand>
</feature>
<feature type="binding site" evidence="1">
    <location>
        <position position="594"/>
    </location>
    <ligand>
        <name>Mg(2+)</name>
        <dbReference type="ChEBI" id="CHEBI:18420"/>
    </ligand>
</feature>
<feature type="binding site" evidence="1">
    <location>
        <position position="928"/>
    </location>
    <ligand>
        <name>Zn(2+)</name>
        <dbReference type="ChEBI" id="CHEBI:29105"/>
        <label>2</label>
    </ligand>
</feature>
<feature type="binding site" evidence="1">
    <location>
        <position position="1002"/>
    </location>
    <ligand>
        <name>Zn(2+)</name>
        <dbReference type="ChEBI" id="CHEBI:29105"/>
        <label>2</label>
    </ligand>
</feature>
<feature type="binding site" evidence="1">
    <location>
        <position position="1009"/>
    </location>
    <ligand>
        <name>Zn(2+)</name>
        <dbReference type="ChEBI" id="CHEBI:29105"/>
        <label>2</label>
    </ligand>
</feature>
<feature type="binding site" evidence="1">
    <location>
        <position position="1012"/>
    </location>
    <ligand>
        <name>Zn(2+)</name>
        <dbReference type="ChEBI" id="CHEBI:29105"/>
        <label>2</label>
    </ligand>
</feature>
<keyword id="KW-0240">DNA-directed RNA polymerase</keyword>
<keyword id="KW-0460">Magnesium</keyword>
<keyword id="KW-0479">Metal-binding</keyword>
<keyword id="KW-0548">Nucleotidyltransferase</keyword>
<keyword id="KW-1185">Reference proteome</keyword>
<keyword id="KW-0804">Transcription</keyword>
<keyword id="KW-0808">Transferase</keyword>
<keyword id="KW-0862">Zinc</keyword>
<protein>
    <recommendedName>
        <fullName evidence="1">DNA-directed RNA polymerase subunit beta'</fullName>
        <shortName evidence="1">RNAP subunit beta'</shortName>
        <ecNumber evidence="1">2.7.7.6</ecNumber>
    </recommendedName>
    <alternativeName>
        <fullName evidence="1">RNA polymerase subunit beta'</fullName>
    </alternativeName>
    <alternativeName>
        <fullName evidence="1">Transcriptase subunit beta'</fullName>
    </alternativeName>
</protein>